<keyword id="KW-1185">Reference proteome</keyword>
<gene>
    <name evidence="1" type="primary">yaeP</name>
    <name type="ordered locus">E2348C_0195</name>
</gene>
<reference key="1">
    <citation type="journal article" date="2009" name="J. Bacteriol.">
        <title>Complete genome sequence and comparative genome analysis of enteropathogenic Escherichia coli O127:H6 strain E2348/69.</title>
        <authorList>
            <person name="Iguchi A."/>
            <person name="Thomson N.R."/>
            <person name="Ogura Y."/>
            <person name="Saunders D."/>
            <person name="Ooka T."/>
            <person name="Henderson I.R."/>
            <person name="Harris D."/>
            <person name="Asadulghani M."/>
            <person name="Kurokawa K."/>
            <person name="Dean P."/>
            <person name="Kenny B."/>
            <person name="Quail M.A."/>
            <person name="Thurston S."/>
            <person name="Dougan G."/>
            <person name="Hayashi T."/>
            <person name="Parkhill J."/>
            <person name="Frankel G."/>
        </authorList>
    </citation>
    <scope>NUCLEOTIDE SEQUENCE [LARGE SCALE GENOMIC DNA]</scope>
    <source>
        <strain>E2348/69 / EPEC</strain>
    </source>
</reference>
<proteinExistence type="inferred from homology"/>
<sequence length="66" mass="7214">MEKYCELIRKRYAEIASGDLGYVPDALGCVLKVLNEMAADDALSEAVREKAAYAAANLLVSDYVNE</sequence>
<evidence type="ECO:0000255" key="1">
    <source>
        <dbReference type="HAMAP-Rule" id="MF_01064"/>
    </source>
</evidence>
<name>YAEP_ECO27</name>
<protein>
    <recommendedName>
        <fullName evidence="1">UPF0253 protein YaeP</fullName>
    </recommendedName>
</protein>
<comment type="similarity">
    <text evidence="1">Belongs to the UPF0253 family.</text>
</comment>
<feature type="chain" id="PRO_1000149726" description="UPF0253 protein YaeP">
    <location>
        <begin position="1"/>
        <end position="66"/>
    </location>
</feature>
<organism>
    <name type="scientific">Escherichia coli O127:H6 (strain E2348/69 / EPEC)</name>
    <dbReference type="NCBI Taxonomy" id="574521"/>
    <lineage>
        <taxon>Bacteria</taxon>
        <taxon>Pseudomonadati</taxon>
        <taxon>Pseudomonadota</taxon>
        <taxon>Gammaproteobacteria</taxon>
        <taxon>Enterobacterales</taxon>
        <taxon>Enterobacteriaceae</taxon>
        <taxon>Escherichia</taxon>
    </lineage>
</organism>
<dbReference type="EMBL" id="FM180568">
    <property type="protein sequence ID" value="CAS07743.1"/>
    <property type="molecule type" value="Genomic_DNA"/>
</dbReference>
<dbReference type="RefSeq" id="WP_000417058.1">
    <property type="nucleotide sequence ID" value="NC_011601.1"/>
</dbReference>
<dbReference type="SMR" id="B7UJ91"/>
<dbReference type="KEGG" id="ecg:E2348C_0195"/>
<dbReference type="HOGENOM" id="CLU_190008_0_0_6"/>
<dbReference type="Proteomes" id="UP000008205">
    <property type="component" value="Chromosome"/>
</dbReference>
<dbReference type="HAMAP" id="MF_01064">
    <property type="entry name" value="UPF0253"/>
    <property type="match status" value="1"/>
</dbReference>
<dbReference type="InterPro" id="IPR009624">
    <property type="entry name" value="UPF0253"/>
</dbReference>
<dbReference type="NCBIfam" id="NF003436">
    <property type="entry name" value="PRK04964.1"/>
    <property type="match status" value="1"/>
</dbReference>
<dbReference type="Pfam" id="PF06786">
    <property type="entry name" value="UPF0253"/>
    <property type="match status" value="1"/>
</dbReference>
<accession>B7UJ91</accession>